<gene>
    <name evidence="1" type="primary">nfo</name>
    <name type="synonym">xthA</name>
    <name type="ordered locus">rrnAC2015</name>
</gene>
<evidence type="ECO:0000255" key="1">
    <source>
        <dbReference type="HAMAP-Rule" id="MF_00152"/>
    </source>
</evidence>
<organism>
    <name type="scientific">Haloarcula marismortui (strain ATCC 43049 / DSM 3752 / JCM 8966 / VKM B-1809)</name>
    <name type="common">Halobacterium marismortui</name>
    <dbReference type="NCBI Taxonomy" id="272569"/>
    <lineage>
        <taxon>Archaea</taxon>
        <taxon>Methanobacteriati</taxon>
        <taxon>Methanobacteriota</taxon>
        <taxon>Stenosarchaea group</taxon>
        <taxon>Halobacteria</taxon>
        <taxon>Halobacteriales</taxon>
        <taxon>Haloarculaceae</taxon>
        <taxon>Haloarcula</taxon>
    </lineage>
</organism>
<proteinExistence type="inferred from homology"/>
<feature type="chain" id="PRO_0000190892" description="Probable endonuclease 4">
    <location>
        <begin position="1"/>
        <end position="277"/>
    </location>
</feature>
<feature type="binding site" evidence="1">
    <location>
        <position position="67"/>
    </location>
    <ligand>
        <name>Zn(2+)</name>
        <dbReference type="ChEBI" id="CHEBI:29105"/>
        <label>1</label>
    </ligand>
</feature>
<feature type="binding site" evidence="1">
    <location>
        <position position="107"/>
    </location>
    <ligand>
        <name>Zn(2+)</name>
        <dbReference type="ChEBI" id="CHEBI:29105"/>
        <label>1</label>
    </ligand>
</feature>
<feature type="binding site" evidence="1">
    <location>
        <position position="141"/>
    </location>
    <ligand>
        <name>Zn(2+)</name>
        <dbReference type="ChEBI" id="CHEBI:29105"/>
        <label>1</label>
    </ligand>
</feature>
<feature type="binding site" evidence="1">
    <location>
        <position position="141"/>
    </location>
    <ligand>
        <name>Zn(2+)</name>
        <dbReference type="ChEBI" id="CHEBI:29105"/>
        <label>2</label>
    </ligand>
</feature>
<feature type="binding site" evidence="1">
    <location>
        <position position="173"/>
    </location>
    <ligand>
        <name>Zn(2+)</name>
        <dbReference type="ChEBI" id="CHEBI:29105"/>
        <label>2</label>
    </ligand>
</feature>
<feature type="binding site" evidence="1">
    <location>
        <position position="176"/>
    </location>
    <ligand>
        <name>Zn(2+)</name>
        <dbReference type="ChEBI" id="CHEBI:29105"/>
        <label>3</label>
    </ligand>
</feature>
<feature type="binding site" evidence="1">
    <location>
        <position position="210"/>
    </location>
    <ligand>
        <name>Zn(2+)</name>
        <dbReference type="ChEBI" id="CHEBI:29105"/>
        <label>2</label>
    </ligand>
</feature>
<feature type="binding site" evidence="1">
    <location>
        <position position="223"/>
    </location>
    <ligand>
        <name>Zn(2+)</name>
        <dbReference type="ChEBI" id="CHEBI:29105"/>
        <label>3</label>
    </ligand>
</feature>
<feature type="binding site" evidence="1">
    <location>
        <position position="225"/>
    </location>
    <ligand>
        <name>Zn(2+)</name>
        <dbReference type="ChEBI" id="CHEBI:29105"/>
        <label>3</label>
    </ligand>
</feature>
<feature type="binding site" evidence="1">
    <location>
        <position position="255"/>
    </location>
    <ligand>
        <name>Zn(2+)</name>
        <dbReference type="ChEBI" id="CHEBI:29105"/>
        <label>2</label>
    </ligand>
</feature>
<accession>Q5V0S8</accession>
<dbReference type="EC" id="3.1.21.2" evidence="1"/>
<dbReference type="EMBL" id="AY596297">
    <property type="protein sequence ID" value="AAV46875.1"/>
    <property type="molecule type" value="Genomic_DNA"/>
</dbReference>
<dbReference type="RefSeq" id="WP_007188693.1">
    <property type="nucleotide sequence ID" value="NZ_CP039138.1"/>
</dbReference>
<dbReference type="SMR" id="Q5V0S8"/>
<dbReference type="STRING" id="272569.rrnAC2015"/>
<dbReference type="PaxDb" id="272569-rrnAC2015"/>
<dbReference type="EnsemblBacteria" id="AAV46875">
    <property type="protein sequence ID" value="AAV46875"/>
    <property type="gene ID" value="rrnAC2015"/>
</dbReference>
<dbReference type="KEGG" id="hma:rrnAC2015"/>
<dbReference type="PATRIC" id="fig|272569.17.peg.2669"/>
<dbReference type="eggNOG" id="arCOG01894">
    <property type="taxonomic scope" value="Archaea"/>
</dbReference>
<dbReference type="HOGENOM" id="CLU_025885_0_1_2"/>
<dbReference type="Proteomes" id="UP000001169">
    <property type="component" value="Chromosome I"/>
</dbReference>
<dbReference type="GO" id="GO:0008833">
    <property type="term" value="F:deoxyribonuclease IV (phage-T4-induced) activity"/>
    <property type="evidence" value="ECO:0007669"/>
    <property type="project" value="UniProtKB-UniRule"/>
</dbReference>
<dbReference type="GO" id="GO:0003677">
    <property type="term" value="F:DNA binding"/>
    <property type="evidence" value="ECO:0007669"/>
    <property type="project" value="InterPro"/>
</dbReference>
<dbReference type="GO" id="GO:0003906">
    <property type="term" value="F:DNA-(apurinic or apyrimidinic site) endonuclease activity"/>
    <property type="evidence" value="ECO:0007669"/>
    <property type="project" value="TreeGrafter"/>
</dbReference>
<dbReference type="GO" id="GO:0008081">
    <property type="term" value="F:phosphoric diester hydrolase activity"/>
    <property type="evidence" value="ECO:0007669"/>
    <property type="project" value="TreeGrafter"/>
</dbReference>
<dbReference type="GO" id="GO:0008270">
    <property type="term" value="F:zinc ion binding"/>
    <property type="evidence" value="ECO:0007669"/>
    <property type="project" value="UniProtKB-UniRule"/>
</dbReference>
<dbReference type="GO" id="GO:0006284">
    <property type="term" value="P:base-excision repair"/>
    <property type="evidence" value="ECO:0007669"/>
    <property type="project" value="TreeGrafter"/>
</dbReference>
<dbReference type="CDD" id="cd00019">
    <property type="entry name" value="AP2Ec"/>
    <property type="match status" value="1"/>
</dbReference>
<dbReference type="FunFam" id="3.20.20.150:FF:000001">
    <property type="entry name" value="Probable endonuclease 4"/>
    <property type="match status" value="1"/>
</dbReference>
<dbReference type="Gene3D" id="3.20.20.150">
    <property type="entry name" value="Divalent-metal-dependent TIM barrel enzymes"/>
    <property type="match status" value="1"/>
</dbReference>
<dbReference type="HAMAP" id="MF_00152">
    <property type="entry name" value="Nfo"/>
    <property type="match status" value="1"/>
</dbReference>
<dbReference type="InterPro" id="IPR001719">
    <property type="entry name" value="AP_endonuc_2"/>
</dbReference>
<dbReference type="InterPro" id="IPR018246">
    <property type="entry name" value="AP_endonuc_F2_Zn_BS"/>
</dbReference>
<dbReference type="InterPro" id="IPR036237">
    <property type="entry name" value="Xyl_isomerase-like_sf"/>
</dbReference>
<dbReference type="InterPro" id="IPR013022">
    <property type="entry name" value="Xyl_isomerase-like_TIM-brl"/>
</dbReference>
<dbReference type="NCBIfam" id="TIGR00587">
    <property type="entry name" value="nfo"/>
    <property type="match status" value="1"/>
</dbReference>
<dbReference type="PANTHER" id="PTHR21445:SF0">
    <property type="entry name" value="APURINIC-APYRIMIDINIC ENDONUCLEASE"/>
    <property type="match status" value="1"/>
</dbReference>
<dbReference type="PANTHER" id="PTHR21445">
    <property type="entry name" value="ENDONUCLEASE IV ENDODEOXYRIBONUCLEASE IV"/>
    <property type="match status" value="1"/>
</dbReference>
<dbReference type="Pfam" id="PF01261">
    <property type="entry name" value="AP_endonuc_2"/>
    <property type="match status" value="1"/>
</dbReference>
<dbReference type="SMART" id="SM00518">
    <property type="entry name" value="AP2Ec"/>
    <property type="match status" value="1"/>
</dbReference>
<dbReference type="SUPFAM" id="SSF51658">
    <property type="entry name" value="Xylose isomerase-like"/>
    <property type="match status" value="1"/>
</dbReference>
<dbReference type="PROSITE" id="PS00731">
    <property type="entry name" value="AP_NUCLEASE_F2_3"/>
    <property type="match status" value="1"/>
</dbReference>
<dbReference type="PROSITE" id="PS51432">
    <property type="entry name" value="AP_NUCLEASE_F2_4"/>
    <property type="match status" value="1"/>
</dbReference>
<protein>
    <recommendedName>
        <fullName evidence="1">Probable endonuclease 4</fullName>
        <ecNumber evidence="1">3.1.21.2</ecNumber>
    </recommendedName>
    <alternativeName>
        <fullName evidence="1">Endodeoxyribonuclease IV</fullName>
    </alternativeName>
    <alternativeName>
        <fullName evidence="1">Endonuclease IV</fullName>
    </alternativeName>
</protein>
<comment type="function">
    <text evidence="1">Endonuclease IV plays a role in DNA repair. It cleaves phosphodiester bonds at apurinic or apyrimidinic (AP) sites, generating a 3'-hydroxyl group and a 5'-terminal sugar phosphate.</text>
</comment>
<comment type="catalytic activity">
    <reaction evidence="1">
        <text>Endonucleolytic cleavage to 5'-phosphooligonucleotide end-products.</text>
        <dbReference type="EC" id="3.1.21.2"/>
    </reaction>
</comment>
<comment type="cofactor">
    <cofactor evidence="1">
        <name>Zn(2+)</name>
        <dbReference type="ChEBI" id="CHEBI:29105"/>
    </cofactor>
    <text evidence="1">Binds 3 Zn(2+) ions.</text>
</comment>
<comment type="similarity">
    <text evidence="1">Belongs to the AP endonuclease 2 family.</text>
</comment>
<sequence length="277" mass="30004">MVRVGAHTSIAGGVYNAVEEQVEYSGNCGQIFSHSPQVWQDPNIDDDEAEQFRDLAADHGVGPWVIHSSYLVNLCTPKDDLREKSLDSMQKEVDAAAKLGIEYVNVHLGAHTGAGVDGGLDNAASVLDDLDIPEGVTVLVESDAGSGTKLGGQFEHLATVRERTDQDIEFCLDTAHMFAAGYDLSTPEAVDETLAEFDEVVGVEDLACVHLNDSKHECGTNKDEHAHIGEGHIGEDGMRAFVNHDAIRDVPLVLETPTENGKSFAWNIERVKELRGE</sequence>
<keyword id="KW-0227">DNA damage</keyword>
<keyword id="KW-0234">DNA repair</keyword>
<keyword id="KW-0255">Endonuclease</keyword>
<keyword id="KW-0378">Hydrolase</keyword>
<keyword id="KW-0479">Metal-binding</keyword>
<keyword id="KW-0540">Nuclease</keyword>
<keyword id="KW-1185">Reference proteome</keyword>
<keyword id="KW-0862">Zinc</keyword>
<reference key="1">
    <citation type="journal article" date="2004" name="Genome Res.">
        <title>Genome sequence of Haloarcula marismortui: a halophilic archaeon from the Dead Sea.</title>
        <authorList>
            <person name="Baliga N.S."/>
            <person name="Bonneau R."/>
            <person name="Facciotti M.T."/>
            <person name="Pan M."/>
            <person name="Glusman G."/>
            <person name="Deutsch E.W."/>
            <person name="Shannon P."/>
            <person name="Chiu Y."/>
            <person name="Weng R.S."/>
            <person name="Gan R.R."/>
            <person name="Hung P."/>
            <person name="Date S.V."/>
            <person name="Marcotte E."/>
            <person name="Hood L."/>
            <person name="Ng W.V."/>
        </authorList>
    </citation>
    <scope>NUCLEOTIDE SEQUENCE [LARGE SCALE GENOMIC DNA]</scope>
    <source>
        <strain>ATCC 43049 / DSM 3752 / JCM 8966 / VKM B-1809</strain>
    </source>
</reference>
<name>END4_HALMA</name>